<organism>
    <name type="scientific">Bryonia dioica</name>
    <name type="common">Red bryony</name>
    <name type="synonym">Bryonia cretica subsp. dioica</name>
    <dbReference type="NCBI Taxonomy" id="3652"/>
    <lineage>
        <taxon>Eukaryota</taxon>
        <taxon>Viridiplantae</taxon>
        <taxon>Streptophyta</taxon>
        <taxon>Embryophyta</taxon>
        <taxon>Tracheophyta</taxon>
        <taxon>Spermatophyta</taxon>
        <taxon>Magnoliopsida</taxon>
        <taxon>eudicotyledons</taxon>
        <taxon>Gunneridae</taxon>
        <taxon>Pentapetalae</taxon>
        <taxon>rosids</taxon>
        <taxon>fabids</taxon>
        <taxon>Cucurbitales</taxon>
        <taxon>Cucurbitaceae</taxon>
        <taxon>Bryonieae</taxon>
        <taxon>Bryonia</taxon>
    </lineage>
</organism>
<feature type="initiator methionine" description="Removed" evidence="1">
    <location>
        <position position="1"/>
    </location>
</feature>
<feature type="chain" id="PRO_0000198284" description="Calmodulin">
    <location>
        <begin position="2"/>
        <end position="149"/>
    </location>
</feature>
<feature type="domain" description="EF-hand 1" evidence="2">
    <location>
        <begin position="8"/>
        <end position="43"/>
    </location>
</feature>
<feature type="domain" description="EF-hand 2" evidence="2">
    <location>
        <begin position="44"/>
        <end position="79"/>
    </location>
</feature>
<feature type="domain" description="EF-hand 3" evidence="2">
    <location>
        <begin position="81"/>
        <end position="116"/>
    </location>
</feature>
<feature type="domain" description="EF-hand 4" evidence="2">
    <location>
        <begin position="117"/>
        <end position="149"/>
    </location>
</feature>
<feature type="binding site" evidence="2">
    <location>
        <position position="21"/>
    </location>
    <ligand>
        <name>Ca(2+)</name>
        <dbReference type="ChEBI" id="CHEBI:29108"/>
        <label>1</label>
    </ligand>
</feature>
<feature type="binding site" evidence="2">
    <location>
        <position position="23"/>
    </location>
    <ligand>
        <name>Ca(2+)</name>
        <dbReference type="ChEBI" id="CHEBI:29108"/>
        <label>1</label>
    </ligand>
</feature>
<feature type="binding site" evidence="2">
    <location>
        <position position="25"/>
    </location>
    <ligand>
        <name>Ca(2+)</name>
        <dbReference type="ChEBI" id="CHEBI:29108"/>
        <label>1</label>
    </ligand>
</feature>
<feature type="binding site" evidence="2">
    <location>
        <position position="27"/>
    </location>
    <ligand>
        <name>Ca(2+)</name>
        <dbReference type="ChEBI" id="CHEBI:29108"/>
        <label>1</label>
    </ligand>
</feature>
<feature type="binding site" evidence="2">
    <location>
        <position position="32"/>
    </location>
    <ligand>
        <name>Ca(2+)</name>
        <dbReference type="ChEBI" id="CHEBI:29108"/>
        <label>1</label>
    </ligand>
</feature>
<feature type="binding site" evidence="2">
    <location>
        <position position="57"/>
    </location>
    <ligand>
        <name>Ca(2+)</name>
        <dbReference type="ChEBI" id="CHEBI:29108"/>
        <label>2</label>
    </ligand>
</feature>
<feature type="binding site" evidence="2">
    <location>
        <position position="59"/>
    </location>
    <ligand>
        <name>Ca(2+)</name>
        <dbReference type="ChEBI" id="CHEBI:29108"/>
        <label>2</label>
    </ligand>
</feature>
<feature type="binding site" evidence="2">
    <location>
        <position position="61"/>
    </location>
    <ligand>
        <name>Ca(2+)</name>
        <dbReference type="ChEBI" id="CHEBI:29108"/>
        <label>2</label>
    </ligand>
</feature>
<feature type="binding site" evidence="2">
    <location>
        <position position="63"/>
    </location>
    <ligand>
        <name>Ca(2+)</name>
        <dbReference type="ChEBI" id="CHEBI:29108"/>
        <label>2</label>
    </ligand>
</feature>
<feature type="binding site" evidence="2">
    <location>
        <position position="68"/>
    </location>
    <ligand>
        <name>Ca(2+)</name>
        <dbReference type="ChEBI" id="CHEBI:29108"/>
        <label>2</label>
    </ligand>
</feature>
<feature type="binding site" evidence="2">
    <location>
        <position position="94"/>
    </location>
    <ligand>
        <name>Ca(2+)</name>
        <dbReference type="ChEBI" id="CHEBI:29108"/>
        <label>3</label>
    </ligand>
</feature>
<feature type="binding site" evidence="2">
    <location>
        <position position="96"/>
    </location>
    <ligand>
        <name>Ca(2+)</name>
        <dbReference type="ChEBI" id="CHEBI:29108"/>
        <label>3</label>
    </ligand>
</feature>
<feature type="binding site" evidence="2">
    <location>
        <position position="98"/>
    </location>
    <ligand>
        <name>Ca(2+)</name>
        <dbReference type="ChEBI" id="CHEBI:29108"/>
        <label>3</label>
    </ligand>
</feature>
<feature type="binding site" evidence="2">
    <location>
        <position position="105"/>
    </location>
    <ligand>
        <name>Ca(2+)</name>
        <dbReference type="ChEBI" id="CHEBI:29108"/>
        <label>3</label>
    </ligand>
</feature>
<feature type="binding site" evidence="2">
    <location>
        <position position="130"/>
    </location>
    <ligand>
        <name>Ca(2+)</name>
        <dbReference type="ChEBI" id="CHEBI:29108"/>
        <label>4</label>
    </ligand>
</feature>
<feature type="binding site" evidence="2">
    <location>
        <position position="132"/>
    </location>
    <ligand>
        <name>Ca(2+)</name>
        <dbReference type="ChEBI" id="CHEBI:29108"/>
        <label>4</label>
    </ligand>
</feature>
<feature type="binding site" evidence="2">
    <location>
        <position position="134"/>
    </location>
    <ligand>
        <name>Ca(2+)</name>
        <dbReference type="ChEBI" id="CHEBI:29108"/>
        <label>4</label>
    </ligand>
</feature>
<feature type="binding site" evidence="2">
    <location>
        <position position="136"/>
    </location>
    <ligand>
        <name>Ca(2+)</name>
        <dbReference type="ChEBI" id="CHEBI:29108"/>
        <label>4</label>
    </ligand>
</feature>
<feature type="binding site" evidence="2">
    <location>
        <position position="141"/>
    </location>
    <ligand>
        <name>Ca(2+)</name>
        <dbReference type="ChEBI" id="CHEBI:29108"/>
        <label>4</label>
    </ligand>
</feature>
<feature type="modified residue" description="N6,N6,N6-trimethyllysine" evidence="1">
    <location>
        <position position="116"/>
    </location>
</feature>
<feature type="sequence conflict" description="In Ref. 1; AAA16320." evidence="3" ref="1">
    <original>I</original>
    <variation>T</variation>
    <location>
        <position position="137"/>
    </location>
</feature>
<dbReference type="EMBL" id="L14071">
    <property type="protein sequence ID" value="AAA16320.1"/>
    <property type="molecule type" value="mRNA"/>
</dbReference>
<dbReference type="PIR" id="S40301">
    <property type="entry name" value="S40301"/>
</dbReference>
<dbReference type="SMR" id="P62202"/>
<dbReference type="GO" id="GO:0016460">
    <property type="term" value="C:myosin II complex"/>
    <property type="evidence" value="ECO:0007669"/>
    <property type="project" value="TreeGrafter"/>
</dbReference>
<dbReference type="GO" id="GO:0005509">
    <property type="term" value="F:calcium ion binding"/>
    <property type="evidence" value="ECO:0007669"/>
    <property type="project" value="InterPro"/>
</dbReference>
<dbReference type="CDD" id="cd00051">
    <property type="entry name" value="EFh"/>
    <property type="match status" value="2"/>
</dbReference>
<dbReference type="FunFam" id="1.10.238.10:FF:000034">
    <property type="entry name" value="Calmodulin"/>
    <property type="match status" value="1"/>
</dbReference>
<dbReference type="FunFam" id="1.10.238.10:FF:000042">
    <property type="entry name" value="Calmodulin"/>
    <property type="match status" value="1"/>
</dbReference>
<dbReference type="Gene3D" id="1.10.238.10">
    <property type="entry name" value="EF-hand"/>
    <property type="match status" value="3"/>
</dbReference>
<dbReference type="InterPro" id="IPR050230">
    <property type="entry name" value="CALM/Myosin/TropC-like"/>
</dbReference>
<dbReference type="InterPro" id="IPR011992">
    <property type="entry name" value="EF-hand-dom_pair"/>
</dbReference>
<dbReference type="InterPro" id="IPR018247">
    <property type="entry name" value="EF_Hand_1_Ca_BS"/>
</dbReference>
<dbReference type="InterPro" id="IPR002048">
    <property type="entry name" value="EF_hand_dom"/>
</dbReference>
<dbReference type="PANTHER" id="PTHR23048:SF53">
    <property type="entry name" value="CALMODULIN"/>
    <property type="match status" value="1"/>
</dbReference>
<dbReference type="PANTHER" id="PTHR23048">
    <property type="entry name" value="MYOSIN LIGHT CHAIN 1, 3"/>
    <property type="match status" value="1"/>
</dbReference>
<dbReference type="Pfam" id="PF13499">
    <property type="entry name" value="EF-hand_7"/>
    <property type="match status" value="2"/>
</dbReference>
<dbReference type="SMART" id="SM00054">
    <property type="entry name" value="EFh"/>
    <property type="match status" value="4"/>
</dbReference>
<dbReference type="SUPFAM" id="SSF47473">
    <property type="entry name" value="EF-hand"/>
    <property type="match status" value="1"/>
</dbReference>
<dbReference type="PROSITE" id="PS00018">
    <property type="entry name" value="EF_HAND_1"/>
    <property type="match status" value="4"/>
</dbReference>
<dbReference type="PROSITE" id="PS50222">
    <property type="entry name" value="EF_HAND_2"/>
    <property type="match status" value="4"/>
</dbReference>
<reference key="1">
    <citation type="journal article" date="1993" name="Plant Mol. Biol.">
        <title>Isolation, sequencing and analysis of the expression of Bryonia calmodulin after mechanical perturbation.</title>
        <authorList>
            <person name="Galaud J.-P."/>
            <person name="Lareyre J.-J."/>
            <person name="Boyer N."/>
        </authorList>
    </citation>
    <scope>NUCLEOTIDE SEQUENCE [MRNA]</scope>
</reference>
<name>CALM_BRYDI</name>
<sequence length="149" mass="16848">MADQLTDDQISEFKEAFSLFDKDGDGCITTKELGTVMRSLGQNPTEAELQDMINEVDADGNGTIDFPEFLNLMARKMKDTDSEEELKEAFRVFDKDQNGFISAAELRHVMTNLGEKLTDEEVDEMIREADVDGDGQINYEEFVKVMMAK</sequence>
<protein>
    <recommendedName>
        <fullName>Calmodulin</fullName>
        <shortName>CaM</shortName>
    </recommendedName>
    <alternativeName>
        <fullName>BC329</fullName>
    </alternativeName>
</protein>
<keyword id="KW-0106">Calcium</keyword>
<keyword id="KW-0479">Metal-binding</keyword>
<keyword id="KW-0488">Methylation</keyword>
<keyword id="KW-0677">Repeat</keyword>
<comment type="function">
    <text>Calmodulin mediates the control of a large number of enzymes, ion channels and other proteins by Ca(2+). Among the enzymes to be stimulated by the calmodulin-Ca(2+) complex are a number of protein kinases and phosphatases.</text>
</comment>
<comment type="miscellaneous">
    <text>This protein has four functional calcium-binding sites.</text>
</comment>
<comment type="similarity">
    <text evidence="3">Belongs to the calmodulin family.</text>
</comment>
<evidence type="ECO:0000250" key="1"/>
<evidence type="ECO:0000255" key="2">
    <source>
        <dbReference type="PROSITE-ProRule" id="PRU00448"/>
    </source>
</evidence>
<evidence type="ECO:0000305" key="3"/>
<accession>P62202</accession>
<accession>P27162</accession>
<accession>P34792</accession>
<proteinExistence type="evidence at transcript level"/>